<protein>
    <recommendedName>
        <fullName evidence="1">Protein-methionine-sulfoxide reductase heme-binding subunit MsrQ</fullName>
    </recommendedName>
    <alternativeName>
        <fullName evidence="1">Flavocytochrome MsrQ</fullName>
    </alternativeName>
</protein>
<accession>B4SUN3</accession>
<organism>
    <name type="scientific">Salmonella newport (strain SL254)</name>
    <dbReference type="NCBI Taxonomy" id="423368"/>
    <lineage>
        <taxon>Bacteria</taxon>
        <taxon>Pseudomonadati</taxon>
        <taxon>Pseudomonadota</taxon>
        <taxon>Gammaproteobacteria</taxon>
        <taxon>Enterobacterales</taxon>
        <taxon>Enterobacteriaceae</taxon>
        <taxon>Salmonella</taxon>
    </lineage>
</organism>
<keyword id="KW-0997">Cell inner membrane</keyword>
<keyword id="KW-1003">Cell membrane</keyword>
<keyword id="KW-0249">Electron transport</keyword>
<keyword id="KW-0285">Flavoprotein</keyword>
<keyword id="KW-0288">FMN</keyword>
<keyword id="KW-0349">Heme</keyword>
<keyword id="KW-0408">Iron</keyword>
<keyword id="KW-0472">Membrane</keyword>
<keyword id="KW-0479">Metal-binding</keyword>
<keyword id="KW-0812">Transmembrane</keyword>
<keyword id="KW-1133">Transmembrane helix</keyword>
<keyword id="KW-0813">Transport</keyword>
<dbReference type="EMBL" id="CP001113">
    <property type="protein sequence ID" value="ACF63501.1"/>
    <property type="molecule type" value="Genomic_DNA"/>
</dbReference>
<dbReference type="RefSeq" id="WP_001241496.1">
    <property type="nucleotide sequence ID" value="NZ_CCMR01000001.1"/>
</dbReference>
<dbReference type="SMR" id="B4SUN3"/>
<dbReference type="KEGG" id="see:SNSL254_A3641"/>
<dbReference type="HOGENOM" id="CLU_080662_1_0_6"/>
<dbReference type="Proteomes" id="UP000008824">
    <property type="component" value="Chromosome"/>
</dbReference>
<dbReference type="GO" id="GO:0005886">
    <property type="term" value="C:plasma membrane"/>
    <property type="evidence" value="ECO:0007669"/>
    <property type="project" value="UniProtKB-SubCell"/>
</dbReference>
<dbReference type="GO" id="GO:0009055">
    <property type="term" value="F:electron transfer activity"/>
    <property type="evidence" value="ECO:0007669"/>
    <property type="project" value="UniProtKB-UniRule"/>
</dbReference>
<dbReference type="GO" id="GO:0010181">
    <property type="term" value="F:FMN binding"/>
    <property type="evidence" value="ECO:0007669"/>
    <property type="project" value="UniProtKB-UniRule"/>
</dbReference>
<dbReference type="GO" id="GO:0020037">
    <property type="term" value="F:heme binding"/>
    <property type="evidence" value="ECO:0007669"/>
    <property type="project" value="UniProtKB-UniRule"/>
</dbReference>
<dbReference type="GO" id="GO:0046872">
    <property type="term" value="F:metal ion binding"/>
    <property type="evidence" value="ECO:0007669"/>
    <property type="project" value="UniProtKB-KW"/>
</dbReference>
<dbReference type="GO" id="GO:0016679">
    <property type="term" value="F:oxidoreductase activity, acting on diphenols and related substances as donors"/>
    <property type="evidence" value="ECO:0007669"/>
    <property type="project" value="TreeGrafter"/>
</dbReference>
<dbReference type="GO" id="GO:0030091">
    <property type="term" value="P:protein repair"/>
    <property type="evidence" value="ECO:0007669"/>
    <property type="project" value="UniProtKB-UniRule"/>
</dbReference>
<dbReference type="HAMAP" id="MF_01207">
    <property type="entry name" value="MsrQ"/>
    <property type="match status" value="1"/>
</dbReference>
<dbReference type="InterPro" id="IPR013130">
    <property type="entry name" value="Fe3_Rdtase_TM_dom"/>
</dbReference>
<dbReference type="InterPro" id="IPR022837">
    <property type="entry name" value="MsrQ-like"/>
</dbReference>
<dbReference type="NCBIfam" id="NF003832">
    <property type="entry name" value="PRK05419.1-4"/>
    <property type="match status" value="1"/>
</dbReference>
<dbReference type="PANTHER" id="PTHR36964">
    <property type="entry name" value="PROTEIN-METHIONINE-SULFOXIDE REDUCTASE HEME-BINDING SUBUNIT MSRQ"/>
    <property type="match status" value="1"/>
</dbReference>
<dbReference type="PANTHER" id="PTHR36964:SF1">
    <property type="entry name" value="PROTEIN-METHIONINE-SULFOXIDE REDUCTASE HEME-BINDING SUBUNIT MSRQ"/>
    <property type="match status" value="1"/>
</dbReference>
<dbReference type="Pfam" id="PF01794">
    <property type="entry name" value="Ferric_reduct"/>
    <property type="match status" value="1"/>
</dbReference>
<feature type="chain" id="PRO_1000138745" description="Protein-methionine-sulfoxide reductase heme-binding subunit MsrQ">
    <location>
        <begin position="1"/>
        <end position="199"/>
    </location>
</feature>
<feature type="transmembrane region" description="Helical" evidence="1">
    <location>
        <begin position="10"/>
        <end position="30"/>
    </location>
</feature>
<feature type="transmembrane region" description="Helical" evidence="1">
    <location>
        <begin position="82"/>
        <end position="102"/>
    </location>
</feature>
<feature type="transmembrane region" description="Helical" evidence="1">
    <location>
        <begin position="116"/>
        <end position="136"/>
    </location>
</feature>
<feature type="transmembrane region" description="Helical" evidence="1">
    <location>
        <begin position="153"/>
        <end position="173"/>
    </location>
</feature>
<sequence length="199" mass="22896">MRLTVKQITWLKVCLHLAGFLPLLWLFWAINHGGLSADPVKDIQHFTGRTALKFLLATLLVSPLARYAKQPLLIRTRRLLGLWCFVWATLHLTSYALLELGIHNLALLGSELISRPYLTLGIISWLVLLALTLTSTQFAQRKLGKRWQTLHNVVYLVAILAPIHYLWSVKILSPQPVIYAALALALLALRYRKFRQWWR</sequence>
<gene>
    <name evidence="1" type="primary">msrQ</name>
    <name type="ordered locus">SNSL254_A3641</name>
</gene>
<comment type="function">
    <text evidence="1">Part of the MsrPQ system that repairs oxidized periplasmic proteins containing methionine sulfoxide residues (Met-O), using respiratory chain electrons. Thus protects these proteins from oxidative-stress damage caused by reactive species of oxygen and chlorine generated by the host defense mechanisms. MsrPQ is essential for the maintenance of envelope integrity under bleach stress, rescuing a wide series of structurally unrelated periplasmic proteins from methionine oxidation, including the primary periplasmic chaperone SurA and the lipoprotein Pal. MsrQ provides electrons for reduction to the reductase catalytic subunit MsrP, using the quinone pool of the respiratory chain.</text>
</comment>
<comment type="cofactor">
    <cofactor evidence="1">
        <name>FMN</name>
        <dbReference type="ChEBI" id="CHEBI:58210"/>
    </cofactor>
    <text evidence="1">Binds 1 FMN per subunit.</text>
</comment>
<comment type="cofactor">
    <cofactor evidence="1">
        <name>heme b</name>
        <dbReference type="ChEBI" id="CHEBI:60344"/>
    </cofactor>
    <text evidence="1">Binds 1 heme b (iron(II)-protoporphyrin IX) group per subunit.</text>
</comment>
<comment type="subunit">
    <text evidence="1">Heterodimer of a catalytic subunit (MsrP) and a heme-binding subunit (MsrQ).</text>
</comment>
<comment type="subcellular location">
    <subcellularLocation>
        <location evidence="1">Cell inner membrane</location>
        <topology evidence="1">Multi-pass membrane protein</topology>
    </subcellularLocation>
</comment>
<comment type="similarity">
    <text evidence="1">Belongs to the MsrQ family.</text>
</comment>
<name>MSRQ_SALNS</name>
<evidence type="ECO:0000255" key="1">
    <source>
        <dbReference type="HAMAP-Rule" id="MF_01207"/>
    </source>
</evidence>
<proteinExistence type="inferred from homology"/>
<reference key="1">
    <citation type="journal article" date="2011" name="J. Bacteriol.">
        <title>Comparative genomics of 28 Salmonella enterica isolates: evidence for CRISPR-mediated adaptive sublineage evolution.</title>
        <authorList>
            <person name="Fricke W.F."/>
            <person name="Mammel M.K."/>
            <person name="McDermott P.F."/>
            <person name="Tartera C."/>
            <person name="White D.G."/>
            <person name="Leclerc J.E."/>
            <person name="Ravel J."/>
            <person name="Cebula T.A."/>
        </authorList>
    </citation>
    <scope>NUCLEOTIDE SEQUENCE [LARGE SCALE GENOMIC DNA]</scope>
    <source>
        <strain>SL254</strain>
    </source>
</reference>